<accession>P10439</accession>
<protein>
    <recommendedName>
        <fullName evidence="2">SAR-endolysin</fullName>
        <ecNumber evidence="2">3.2.1.17</ecNumber>
    </recommendedName>
    <alternativeName>
        <fullName evidence="2">Endolysin</fullName>
    </alternativeName>
    <alternativeName>
        <fullName evidence="2">Lysis protein</fullName>
    </alternativeName>
    <alternativeName>
        <fullName evidence="2">Lysozyme</fullName>
    </alternativeName>
    <alternativeName>
        <fullName evidence="2">Muramidase</fullName>
    </alternativeName>
</protein>
<sequence length="165" mass="17998">MPPSLRKAVAAAIGGGAIAIASVLITGPSGNDGLEGVSYIPYKDIVGVWTVCHGHTGKDIMLGKTYTKAECKALLNKDLATVARQINPYIKVDIPETTRGPLYSFVYNVGAGNFRTSTLLRKINQGDIKGACDQLRRWTYAGGKQWKGLMTRREIEREVCLWGQQ</sequence>
<organism>
    <name type="scientific">Enterobacteria phage PA-2</name>
    <name type="common">Bacteriophage PA-2</name>
    <dbReference type="NCBI Taxonomy" id="10738"/>
    <lineage>
        <taxon>Viruses</taxon>
        <taxon>Duplodnaviria</taxon>
        <taxon>Heunggongvirae</taxon>
        <taxon>Uroviricota</taxon>
        <taxon>Caudoviricetes</taxon>
        <taxon>Lambdavirus</taxon>
    </lineage>
</organism>
<gene>
    <name type="primary">15</name>
</gene>
<name>ENLYS_BPPA2</name>
<evidence type="ECO:0000255" key="1"/>
<evidence type="ECO:0000255" key="2">
    <source>
        <dbReference type="HAMAP-Rule" id="MF_04136"/>
    </source>
</evidence>
<keyword id="KW-0929">Antimicrobial</keyword>
<keyword id="KW-0081">Bacteriolytic enzyme</keyword>
<keyword id="KW-0204">Cytolysis</keyword>
<keyword id="KW-0326">Glycosidase</keyword>
<keyword id="KW-1030">Host cell inner membrane</keyword>
<keyword id="KW-0578">Host cell lysis by virus</keyword>
<keyword id="KW-1032">Host cell membrane</keyword>
<keyword id="KW-1043">Host membrane</keyword>
<keyword id="KW-0378">Hydrolase</keyword>
<keyword id="KW-0472">Membrane</keyword>
<keyword id="KW-0735">Signal-anchor</keyword>
<keyword id="KW-0812">Transmembrane</keyword>
<keyword id="KW-1133">Transmembrane helix</keyword>
<keyword id="KW-1188">Viral release from host cell</keyword>
<dbReference type="EC" id="3.2.1.17" evidence="2"/>
<dbReference type="EMBL" id="J02580">
    <property type="protein sequence ID" value="AAA32300.1"/>
    <property type="molecule type" value="Genomic_DNA"/>
</dbReference>
<dbReference type="SMR" id="P10439"/>
<dbReference type="CAZy" id="GH24">
    <property type="family name" value="Glycoside Hydrolase Family 24"/>
</dbReference>
<dbReference type="GO" id="GO:0020002">
    <property type="term" value="C:host cell plasma membrane"/>
    <property type="evidence" value="ECO:0007669"/>
    <property type="project" value="UniProtKB-SubCell"/>
</dbReference>
<dbReference type="GO" id="GO:0016020">
    <property type="term" value="C:membrane"/>
    <property type="evidence" value="ECO:0007669"/>
    <property type="project" value="UniProtKB-KW"/>
</dbReference>
<dbReference type="GO" id="GO:0003796">
    <property type="term" value="F:lysozyme activity"/>
    <property type="evidence" value="ECO:0007669"/>
    <property type="project" value="UniProtKB-EC"/>
</dbReference>
<dbReference type="GO" id="GO:0016998">
    <property type="term" value="P:cell wall macromolecule catabolic process"/>
    <property type="evidence" value="ECO:0007669"/>
    <property type="project" value="InterPro"/>
</dbReference>
<dbReference type="GO" id="GO:0042742">
    <property type="term" value="P:defense response to bacterium"/>
    <property type="evidence" value="ECO:0007669"/>
    <property type="project" value="UniProtKB-KW"/>
</dbReference>
<dbReference type="GO" id="GO:0031640">
    <property type="term" value="P:killing of cells of another organism"/>
    <property type="evidence" value="ECO:0007669"/>
    <property type="project" value="UniProtKB-KW"/>
</dbReference>
<dbReference type="GO" id="GO:0009253">
    <property type="term" value="P:peptidoglycan catabolic process"/>
    <property type="evidence" value="ECO:0007669"/>
    <property type="project" value="InterPro"/>
</dbReference>
<dbReference type="CDD" id="cd16900">
    <property type="entry name" value="endolysin_R21-like"/>
    <property type="match status" value="1"/>
</dbReference>
<dbReference type="FunFam" id="1.10.530.40:FF:000001">
    <property type="entry name" value="Lysozyme"/>
    <property type="match status" value="1"/>
</dbReference>
<dbReference type="Gene3D" id="1.10.530.40">
    <property type="match status" value="1"/>
</dbReference>
<dbReference type="HAMAP" id="MF_04110">
    <property type="entry name" value="ENDOLYSIN_T4"/>
    <property type="match status" value="1"/>
</dbReference>
<dbReference type="HAMAP" id="MF_04136">
    <property type="entry name" value="SAR_ENDOLYSIN"/>
    <property type="match status" value="1"/>
</dbReference>
<dbReference type="InterPro" id="IPR051018">
    <property type="entry name" value="Bacteriophage_GH24"/>
</dbReference>
<dbReference type="InterPro" id="IPR034690">
    <property type="entry name" value="Endolysin_T4_type"/>
</dbReference>
<dbReference type="InterPro" id="IPR002196">
    <property type="entry name" value="Glyco_hydro_24"/>
</dbReference>
<dbReference type="InterPro" id="IPR023346">
    <property type="entry name" value="Lysozyme-like_dom_sf"/>
</dbReference>
<dbReference type="InterPro" id="IPR023347">
    <property type="entry name" value="Lysozyme_dom_sf"/>
</dbReference>
<dbReference type="InterPro" id="IPR043688">
    <property type="entry name" value="SAR_endolysin-like"/>
</dbReference>
<dbReference type="PANTHER" id="PTHR38107">
    <property type="match status" value="1"/>
</dbReference>
<dbReference type="PANTHER" id="PTHR38107:SF3">
    <property type="entry name" value="LYSOZYME RRRD-RELATED"/>
    <property type="match status" value="1"/>
</dbReference>
<dbReference type="Pfam" id="PF00959">
    <property type="entry name" value="Phage_lysozyme"/>
    <property type="match status" value="1"/>
</dbReference>
<dbReference type="SUPFAM" id="SSF53955">
    <property type="entry name" value="Lysozyme-like"/>
    <property type="match status" value="1"/>
</dbReference>
<organismHost>
    <name type="scientific">Escherichia coli</name>
    <dbReference type="NCBI Taxonomy" id="562"/>
</organismHost>
<comment type="function">
    <text evidence="2">Signal-arrest-release (SAR) endolysin with lysozyme activity that degrades host peptidoglycans and participates with the pinholin and spanin proteins in the sequential events which lead to programmed host cell lysis releasing the mature viral particles. Once the pinholin has permeabilized the host cell membrane, the SAR-endolysin is released into the periplasm where it breaks down the peptidoglycan layer.</text>
</comment>
<comment type="catalytic activity">
    <reaction evidence="2">
        <text>Hydrolysis of (1-&gt;4)-beta-linkages between N-acetylmuramic acid and N-acetyl-D-glucosamine residues in a peptidoglycan and between N-acetyl-D-glucosamine residues in chitodextrins.</text>
        <dbReference type="EC" id="3.2.1.17"/>
    </reaction>
</comment>
<comment type="subcellular location">
    <subcellularLocation>
        <location evidence="2">Host cell inner membrane</location>
        <topology evidence="2">Single-pass type II membrane protein</topology>
        <orientation evidence="2">Periplasmic side</orientation>
    </subcellularLocation>
    <text evidence="2">Secreted as a signal-anchored, membrane-tethered, inactive endolysin which is subsequently refolded, activated and released by membrane depolarization driven by the pinholin.</text>
</comment>
<comment type="domain">
    <text evidence="2">The signal-anchor, which may also be an uncleaved signal sequence tethers the SAR-endolysin to the membrane until the latter is depolarized by the holin, resulting in the escape of SAR-endolysin from the membrane.</text>
</comment>
<comment type="similarity">
    <text evidence="2">Belongs to the glycosyl hydrolase 24 family.</text>
</comment>
<reference key="1">
    <citation type="journal article" date="1986" name="J. Biol. Chem.">
        <title>Structure of the lc and nmpC outer membrane porin protein genes of lambdoid bacteriophage.</title>
        <authorList>
            <person name="Blasband A.J."/>
            <person name="Marcotte W.R. Jr."/>
            <person name="Schnaitman C.A."/>
        </authorList>
    </citation>
    <scope>NUCLEOTIDE SEQUENCE [GENOMIC DNA]</scope>
</reference>
<feature type="chain" id="PRO_0000218098" description="SAR-endolysin">
    <location>
        <begin position="1"/>
        <end position="165"/>
    </location>
</feature>
<feature type="transmembrane region" description="Helical; Signal-anchor for type II membrane protein" evidence="1">
    <location>
        <begin position="8"/>
        <end position="28"/>
    </location>
</feature>
<feature type="active site" description="Proton donor/acceptor" evidence="2">
    <location>
        <position position="35"/>
    </location>
</feature>
<feature type="active site" description="Proton donor/acceptor" evidence="2">
    <location>
        <position position="44"/>
    </location>
</feature>
<proteinExistence type="inferred from homology"/>